<feature type="chain" id="PRO_1000095106" description="Glutamyl-tRNA(Gln) amidotransferase subunit A">
    <location>
        <begin position="1"/>
        <end position="485"/>
    </location>
</feature>
<feature type="active site" description="Charge relay system" evidence="1">
    <location>
        <position position="78"/>
    </location>
</feature>
<feature type="active site" description="Charge relay system" evidence="1">
    <location>
        <position position="153"/>
    </location>
</feature>
<feature type="active site" description="Acyl-ester intermediate" evidence="1">
    <location>
        <position position="177"/>
    </location>
</feature>
<sequence>MSLFDHSVSELHKKLNNKEISVTDLVEESYKRISDVEDNVKAFLTLDEENARAKAKELDAKIGAEDNGLLFGMPIGVKDNIVTNGLRTTCASKILANFDPIYDATVVQKLKAADTVTIGKLNMDEFAMGSSNENSGFYATKNPWNLDYVPGGSSGGSAAAVAAGEVLFSLGSDTGGSIRQPAAYCGVVGLKPTYGRVSRYGLVAFASSLDQIGPITRTVEDNAYLLQAISGIDRMDATSANVEVGNYLAGLTGDVKGLRIAVPKEYLGEGVGEEARESVLAALKVLEGMGATWEEVSLPHSKYALATYYLLSSSEASANLSRFDGVRYGVRSDNVNNLLDLYKNTRSEGFGDEVKRRIMLGTFALSSGYYDAYYKKAQQVRTLIKNDFENVFANYDVIIGPTTPTPAFKVGEKVDDPMTMYANDILTIPVNLAGVPAISVPCGFGANNMPLGLQIIGKHFDETTIYRVAHAFEQATDYHTKKASL</sequence>
<comment type="function">
    <text evidence="1">Allows the formation of correctly charged Gln-tRNA(Gln) through the transamidation of misacylated Glu-tRNA(Gln) in organisms which lack glutaminyl-tRNA synthetase. The reaction takes place in the presence of glutamine and ATP through an activated gamma-phospho-Glu-tRNA(Gln).</text>
</comment>
<comment type="catalytic activity">
    <reaction evidence="1">
        <text>L-glutamyl-tRNA(Gln) + L-glutamine + ATP + H2O = L-glutaminyl-tRNA(Gln) + L-glutamate + ADP + phosphate + H(+)</text>
        <dbReference type="Rhea" id="RHEA:17521"/>
        <dbReference type="Rhea" id="RHEA-COMP:9681"/>
        <dbReference type="Rhea" id="RHEA-COMP:9684"/>
        <dbReference type="ChEBI" id="CHEBI:15377"/>
        <dbReference type="ChEBI" id="CHEBI:15378"/>
        <dbReference type="ChEBI" id="CHEBI:29985"/>
        <dbReference type="ChEBI" id="CHEBI:30616"/>
        <dbReference type="ChEBI" id="CHEBI:43474"/>
        <dbReference type="ChEBI" id="CHEBI:58359"/>
        <dbReference type="ChEBI" id="CHEBI:78520"/>
        <dbReference type="ChEBI" id="CHEBI:78521"/>
        <dbReference type="ChEBI" id="CHEBI:456216"/>
        <dbReference type="EC" id="6.3.5.7"/>
    </reaction>
</comment>
<comment type="subunit">
    <text evidence="1">Heterotrimer of A, B and C subunits.</text>
</comment>
<comment type="similarity">
    <text evidence="1">Belongs to the amidase family. GatA subfamily.</text>
</comment>
<evidence type="ECO:0000255" key="1">
    <source>
        <dbReference type="HAMAP-Rule" id="MF_00120"/>
    </source>
</evidence>
<accession>A9VRH7</accession>
<proteinExistence type="inferred from homology"/>
<protein>
    <recommendedName>
        <fullName evidence="1">Glutamyl-tRNA(Gln) amidotransferase subunit A</fullName>
        <shortName evidence="1">Glu-ADT subunit A</shortName>
        <ecNumber evidence="1">6.3.5.7</ecNumber>
    </recommendedName>
</protein>
<name>GATA_BACMK</name>
<gene>
    <name evidence="1" type="primary">gatA</name>
    <name type="ordered locus">BcerKBAB4_0301</name>
</gene>
<keyword id="KW-0067">ATP-binding</keyword>
<keyword id="KW-0436">Ligase</keyword>
<keyword id="KW-0547">Nucleotide-binding</keyword>
<keyword id="KW-0648">Protein biosynthesis</keyword>
<reference key="1">
    <citation type="journal article" date="2008" name="Chem. Biol. Interact.">
        <title>Extending the Bacillus cereus group genomics to putative food-borne pathogens of different toxicity.</title>
        <authorList>
            <person name="Lapidus A."/>
            <person name="Goltsman E."/>
            <person name="Auger S."/>
            <person name="Galleron N."/>
            <person name="Segurens B."/>
            <person name="Dossat C."/>
            <person name="Land M.L."/>
            <person name="Broussolle V."/>
            <person name="Brillard J."/>
            <person name="Guinebretiere M.-H."/>
            <person name="Sanchis V."/>
            <person name="Nguen-the C."/>
            <person name="Lereclus D."/>
            <person name="Richardson P."/>
            <person name="Wincker P."/>
            <person name="Weissenbach J."/>
            <person name="Ehrlich S.D."/>
            <person name="Sorokin A."/>
        </authorList>
    </citation>
    <scope>NUCLEOTIDE SEQUENCE [LARGE SCALE GENOMIC DNA]</scope>
    <source>
        <strain>KBAB4</strain>
    </source>
</reference>
<organism>
    <name type="scientific">Bacillus mycoides (strain KBAB4)</name>
    <name type="common">Bacillus weihenstephanensis</name>
    <dbReference type="NCBI Taxonomy" id="315730"/>
    <lineage>
        <taxon>Bacteria</taxon>
        <taxon>Bacillati</taxon>
        <taxon>Bacillota</taxon>
        <taxon>Bacilli</taxon>
        <taxon>Bacillales</taxon>
        <taxon>Bacillaceae</taxon>
        <taxon>Bacillus</taxon>
        <taxon>Bacillus cereus group</taxon>
    </lineage>
</organism>
<dbReference type="EC" id="6.3.5.7" evidence="1"/>
<dbReference type="EMBL" id="CP000903">
    <property type="protein sequence ID" value="ABY41567.1"/>
    <property type="molecule type" value="Genomic_DNA"/>
</dbReference>
<dbReference type="RefSeq" id="WP_002010048.1">
    <property type="nucleotide sequence ID" value="NC_010184.1"/>
</dbReference>
<dbReference type="SMR" id="A9VRH7"/>
<dbReference type="GeneID" id="66264586"/>
<dbReference type="KEGG" id="bwe:BcerKBAB4_0301"/>
<dbReference type="eggNOG" id="COG0154">
    <property type="taxonomic scope" value="Bacteria"/>
</dbReference>
<dbReference type="HOGENOM" id="CLU_009600_0_3_9"/>
<dbReference type="Proteomes" id="UP000002154">
    <property type="component" value="Chromosome"/>
</dbReference>
<dbReference type="GO" id="GO:0030956">
    <property type="term" value="C:glutamyl-tRNA(Gln) amidotransferase complex"/>
    <property type="evidence" value="ECO:0007669"/>
    <property type="project" value="InterPro"/>
</dbReference>
<dbReference type="GO" id="GO:0005524">
    <property type="term" value="F:ATP binding"/>
    <property type="evidence" value="ECO:0007669"/>
    <property type="project" value="UniProtKB-KW"/>
</dbReference>
<dbReference type="GO" id="GO:0050567">
    <property type="term" value="F:glutaminyl-tRNA synthase (glutamine-hydrolyzing) activity"/>
    <property type="evidence" value="ECO:0007669"/>
    <property type="project" value="UniProtKB-UniRule"/>
</dbReference>
<dbReference type="GO" id="GO:0006412">
    <property type="term" value="P:translation"/>
    <property type="evidence" value="ECO:0007669"/>
    <property type="project" value="UniProtKB-UniRule"/>
</dbReference>
<dbReference type="Gene3D" id="3.90.1300.10">
    <property type="entry name" value="Amidase signature (AS) domain"/>
    <property type="match status" value="1"/>
</dbReference>
<dbReference type="HAMAP" id="MF_00120">
    <property type="entry name" value="GatA"/>
    <property type="match status" value="1"/>
</dbReference>
<dbReference type="InterPro" id="IPR000120">
    <property type="entry name" value="Amidase"/>
</dbReference>
<dbReference type="InterPro" id="IPR020556">
    <property type="entry name" value="Amidase_CS"/>
</dbReference>
<dbReference type="InterPro" id="IPR023631">
    <property type="entry name" value="Amidase_dom"/>
</dbReference>
<dbReference type="InterPro" id="IPR036928">
    <property type="entry name" value="AS_sf"/>
</dbReference>
<dbReference type="InterPro" id="IPR004412">
    <property type="entry name" value="GatA"/>
</dbReference>
<dbReference type="NCBIfam" id="TIGR00132">
    <property type="entry name" value="gatA"/>
    <property type="match status" value="1"/>
</dbReference>
<dbReference type="PANTHER" id="PTHR11895:SF151">
    <property type="entry name" value="GLUTAMYL-TRNA(GLN) AMIDOTRANSFERASE SUBUNIT A"/>
    <property type="match status" value="1"/>
</dbReference>
<dbReference type="PANTHER" id="PTHR11895">
    <property type="entry name" value="TRANSAMIDASE"/>
    <property type="match status" value="1"/>
</dbReference>
<dbReference type="Pfam" id="PF01425">
    <property type="entry name" value="Amidase"/>
    <property type="match status" value="1"/>
</dbReference>
<dbReference type="SUPFAM" id="SSF75304">
    <property type="entry name" value="Amidase signature (AS) enzymes"/>
    <property type="match status" value="1"/>
</dbReference>
<dbReference type="PROSITE" id="PS00571">
    <property type="entry name" value="AMIDASES"/>
    <property type="match status" value="1"/>
</dbReference>